<comment type="similarity">
    <text evidence="4">Belongs to the glycosyl hydrolase 22 family.</text>
</comment>
<comment type="caution">
    <text evidence="4">Although related to the glycosyl hydrolase 22 family, lacks the conserved Asp active site, suggesting it may not have lysozyme activity.</text>
</comment>
<protein>
    <recommendedName>
        <fullName>Lysozyme C-like protein DDB_G0288143</fullName>
    </recommendedName>
</protein>
<name>Y8143_DICDI</name>
<dbReference type="EMBL" id="AAFI02000109">
    <property type="protein sequence ID" value="EAL63359.1"/>
    <property type="molecule type" value="Genomic_DNA"/>
</dbReference>
<dbReference type="RefSeq" id="XP_636864.1">
    <property type="nucleotide sequence ID" value="XM_631772.1"/>
</dbReference>
<dbReference type="SMR" id="Q54JC9"/>
<dbReference type="PaxDb" id="44689-DDB0304539"/>
<dbReference type="EnsemblProtists" id="EAL63359">
    <property type="protein sequence ID" value="EAL63359"/>
    <property type="gene ID" value="DDB_G0288143"/>
</dbReference>
<dbReference type="GeneID" id="8626475"/>
<dbReference type="KEGG" id="ddi:DDB_G0288143"/>
<dbReference type="dictyBase" id="DDB_G0288143">
    <property type="gene designation" value="lyC1"/>
</dbReference>
<dbReference type="VEuPathDB" id="AmoebaDB:DDB_G0288143"/>
<dbReference type="HOGENOM" id="CLU_1450181_0_0_1"/>
<dbReference type="InParanoid" id="Q54JC9"/>
<dbReference type="PhylomeDB" id="Q54JC9"/>
<dbReference type="PRO" id="PR:Q54JC9"/>
<dbReference type="Proteomes" id="UP000002195">
    <property type="component" value="Chromosome 5"/>
</dbReference>
<dbReference type="InterPro" id="IPR023346">
    <property type="entry name" value="Lysozyme-like_dom_sf"/>
</dbReference>
<dbReference type="SUPFAM" id="SSF53955">
    <property type="entry name" value="Lysozyme-like"/>
    <property type="match status" value="1"/>
</dbReference>
<evidence type="ECO:0000250" key="1"/>
<evidence type="ECO:0000255" key="2"/>
<evidence type="ECO:0000256" key="3">
    <source>
        <dbReference type="SAM" id="MobiDB-lite"/>
    </source>
</evidence>
<evidence type="ECO:0000305" key="4"/>
<accession>Q54JC9</accession>
<proteinExistence type="inferred from homology"/>
<gene>
    <name type="ORF">DDB_G0288143</name>
</gene>
<feature type="signal peptide" evidence="2">
    <location>
        <begin position="1"/>
        <end position="23"/>
    </location>
</feature>
<feature type="chain" id="PRO_0000389025" description="Lysozyme C-like protein DDB_G0288143">
    <location>
        <begin position="24"/>
        <end position="187"/>
    </location>
</feature>
<feature type="region of interest" description="Disordered" evidence="3">
    <location>
        <begin position="133"/>
        <end position="187"/>
    </location>
</feature>
<feature type="compositionally biased region" description="Low complexity" evidence="3">
    <location>
        <begin position="136"/>
        <end position="175"/>
    </location>
</feature>
<feature type="active site" evidence="1">
    <location>
        <position position="55"/>
    </location>
</feature>
<feature type="disulfide bond" evidence="1">
    <location>
        <begin position="50"/>
        <end position="125"/>
    </location>
</feature>
<feature type="disulfide bond" evidence="1">
    <location>
        <begin position="74"/>
        <end position="82"/>
    </location>
</feature>
<feature type="disulfide bond" evidence="1">
    <location>
        <begin position="78"/>
        <end position="97"/>
    </location>
</feature>
<organism>
    <name type="scientific">Dictyostelium discoideum</name>
    <name type="common">Social amoeba</name>
    <dbReference type="NCBI Taxonomy" id="44689"/>
    <lineage>
        <taxon>Eukaryota</taxon>
        <taxon>Amoebozoa</taxon>
        <taxon>Evosea</taxon>
        <taxon>Eumycetozoa</taxon>
        <taxon>Dictyostelia</taxon>
        <taxon>Dictyosteliales</taxon>
        <taxon>Dictyosteliaceae</taxon>
        <taxon>Dictyostelium</taxon>
    </lineage>
</organism>
<sequence>MKVSNLISTITIASALCLSLTNALVFSPCDKIQSLVKEYFDETIVDEMMCIAYNEAINPKSDSIGLWNLKKEHCNTVCKSICNSEIDLADIKLNTQCAEMVYLEFGFNGWDSYNNGLCKDSWGFCNTQNELRQHGSHSSTSRDSSSSSSRDSTGTGYSSSGSGTSGSGSNSGQTGHFIPGQSGHGLN</sequence>
<keyword id="KW-1015">Disulfide bond</keyword>
<keyword id="KW-1185">Reference proteome</keyword>
<keyword id="KW-0732">Signal</keyword>
<reference key="1">
    <citation type="journal article" date="2005" name="Nature">
        <title>The genome of the social amoeba Dictyostelium discoideum.</title>
        <authorList>
            <person name="Eichinger L."/>
            <person name="Pachebat J.A."/>
            <person name="Gloeckner G."/>
            <person name="Rajandream M.A."/>
            <person name="Sucgang R."/>
            <person name="Berriman M."/>
            <person name="Song J."/>
            <person name="Olsen R."/>
            <person name="Szafranski K."/>
            <person name="Xu Q."/>
            <person name="Tunggal B."/>
            <person name="Kummerfeld S."/>
            <person name="Madera M."/>
            <person name="Konfortov B.A."/>
            <person name="Rivero F."/>
            <person name="Bankier A.T."/>
            <person name="Lehmann R."/>
            <person name="Hamlin N."/>
            <person name="Davies R."/>
            <person name="Gaudet P."/>
            <person name="Fey P."/>
            <person name="Pilcher K."/>
            <person name="Chen G."/>
            <person name="Saunders D."/>
            <person name="Sodergren E.J."/>
            <person name="Davis P."/>
            <person name="Kerhornou A."/>
            <person name="Nie X."/>
            <person name="Hall N."/>
            <person name="Anjard C."/>
            <person name="Hemphill L."/>
            <person name="Bason N."/>
            <person name="Farbrother P."/>
            <person name="Desany B."/>
            <person name="Just E."/>
            <person name="Morio T."/>
            <person name="Rost R."/>
            <person name="Churcher C.M."/>
            <person name="Cooper J."/>
            <person name="Haydock S."/>
            <person name="van Driessche N."/>
            <person name="Cronin A."/>
            <person name="Goodhead I."/>
            <person name="Muzny D.M."/>
            <person name="Mourier T."/>
            <person name="Pain A."/>
            <person name="Lu M."/>
            <person name="Harper D."/>
            <person name="Lindsay R."/>
            <person name="Hauser H."/>
            <person name="James K.D."/>
            <person name="Quiles M."/>
            <person name="Madan Babu M."/>
            <person name="Saito T."/>
            <person name="Buchrieser C."/>
            <person name="Wardroper A."/>
            <person name="Felder M."/>
            <person name="Thangavelu M."/>
            <person name="Johnson D."/>
            <person name="Knights A."/>
            <person name="Loulseged H."/>
            <person name="Mungall K.L."/>
            <person name="Oliver K."/>
            <person name="Price C."/>
            <person name="Quail M.A."/>
            <person name="Urushihara H."/>
            <person name="Hernandez J."/>
            <person name="Rabbinowitsch E."/>
            <person name="Steffen D."/>
            <person name="Sanders M."/>
            <person name="Ma J."/>
            <person name="Kohara Y."/>
            <person name="Sharp S."/>
            <person name="Simmonds M.N."/>
            <person name="Spiegler S."/>
            <person name="Tivey A."/>
            <person name="Sugano S."/>
            <person name="White B."/>
            <person name="Walker D."/>
            <person name="Woodward J.R."/>
            <person name="Winckler T."/>
            <person name="Tanaka Y."/>
            <person name="Shaulsky G."/>
            <person name="Schleicher M."/>
            <person name="Weinstock G.M."/>
            <person name="Rosenthal A."/>
            <person name="Cox E.C."/>
            <person name="Chisholm R.L."/>
            <person name="Gibbs R.A."/>
            <person name="Loomis W.F."/>
            <person name="Platzer M."/>
            <person name="Kay R.R."/>
            <person name="Williams J.G."/>
            <person name="Dear P.H."/>
            <person name="Noegel A.A."/>
            <person name="Barrell B.G."/>
            <person name="Kuspa A."/>
        </authorList>
    </citation>
    <scope>NUCLEOTIDE SEQUENCE [LARGE SCALE GENOMIC DNA]</scope>
    <source>
        <strain>AX4</strain>
    </source>
</reference>